<proteinExistence type="inferred from homology"/>
<keyword id="KW-0067">ATP-binding</keyword>
<keyword id="KW-0347">Helicase</keyword>
<keyword id="KW-0378">Hydrolase</keyword>
<keyword id="KW-0507">mRNA processing</keyword>
<keyword id="KW-0508">mRNA splicing</keyword>
<keyword id="KW-0547">Nucleotide-binding</keyword>
<keyword id="KW-0539">Nucleus</keyword>
<keyword id="KW-1185">Reference proteome</keyword>
<reference key="1">
    <citation type="journal article" date="2008" name="PLoS Genet.">
        <title>Genomic islands in the pathogenic filamentous fungus Aspergillus fumigatus.</title>
        <authorList>
            <person name="Fedorova N.D."/>
            <person name="Khaldi N."/>
            <person name="Joardar V.S."/>
            <person name="Maiti R."/>
            <person name="Amedeo P."/>
            <person name="Anderson M.J."/>
            <person name="Crabtree J."/>
            <person name="Silva J.C."/>
            <person name="Badger J.H."/>
            <person name="Albarraq A."/>
            <person name="Angiuoli S."/>
            <person name="Bussey H."/>
            <person name="Bowyer P."/>
            <person name="Cotty P.J."/>
            <person name="Dyer P.S."/>
            <person name="Egan A."/>
            <person name="Galens K."/>
            <person name="Fraser-Liggett C.M."/>
            <person name="Haas B.J."/>
            <person name="Inman J.M."/>
            <person name="Kent R."/>
            <person name="Lemieux S."/>
            <person name="Malavazi I."/>
            <person name="Orvis J."/>
            <person name="Roemer T."/>
            <person name="Ronning C.M."/>
            <person name="Sundaram J.P."/>
            <person name="Sutton G."/>
            <person name="Turner G."/>
            <person name="Venter J.C."/>
            <person name="White O.R."/>
            <person name="Whitty B.R."/>
            <person name="Youngman P."/>
            <person name="Wolfe K.H."/>
            <person name="Goldman G.H."/>
            <person name="Wortman J.R."/>
            <person name="Jiang B."/>
            <person name="Denning D.W."/>
            <person name="Nierman W.C."/>
        </authorList>
    </citation>
    <scope>NUCLEOTIDE SEQUENCE [LARGE SCALE GENOMIC DNA]</scope>
    <source>
        <strain>ATCC 1020 / DSM 3700 / CBS 544.65 / FGSC A1164 / JCM 1740 / NRRL 181 / WB 181</strain>
    </source>
</reference>
<name>PRP5_NEOFI</name>
<feature type="chain" id="PRO_0000282693" description="Pre-mRNA-processing ATP-dependent RNA helicase prp5">
    <location>
        <begin position="1"/>
        <end position="1193"/>
    </location>
</feature>
<feature type="domain" description="Helicase ATP-binding" evidence="2">
    <location>
        <begin position="588"/>
        <end position="766"/>
    </location>
</feature>
<feature type="domain" description="Helicase C-terminal" evidence="3">
    <location>
        <begin position="793"/>
        <end position="943"/>
    </location>
</feature>
<feature type="region of interest" description="Disordered" evidence="4">
    <location>
        <begin position="1"/>
        <end position="236"/>
    </location>
</feature>
<feature type="region of interest" description="Disordered" evidence="4">
    <location>
        <begin position="326"/>
        <end position="426"/>
    </location>
</feature>
<feature type="region of interest" description="Disordered" evidence="4">
    <location>
        <begin position="957"/>
        <end position="1009"/>
    </location>
</feature>
<feature type="short sequence motif" description="Q motif">
    <location>
        <begin position="557"/>
        <end position="585"/>
    </location>
</feature>
<feature type="short sequence motif" description="DEAD box">
    <location>
        <begin position="714"/>
        <end position="717"/>
    </location>
</feature>
<feature type="compositionally biased region" description="Low complexity" evidence="4">
    <location>
        <begin position="8"/>
        <end position="20"/>
    </location>
</feature>
<feature type="compositionally biased region" description="Basic and acidic residues" evidence="4">
    <location>
        <begin position="24"/>
        <end position="87"/>
    </location>
</feature>
<feature type="compositionally biased region" description="Basic and acidic residues" evidence="4">
    <location>
        <begin position="94"/>
        <end position="153"/>
    </location>
</feature>
<feature type="compositionally biased region" description="Basic and acidic residues" evidence="4">
    <location>
        <begin position="165"/>
        <end position="193"/>
    </location>
</feature>
<feature type="compositionally biased region" description="Low complexity" evidence="4">
    <location>
        <begin position="223"/>
        <end position="235"/>
    </location>
</feature>
<feature type="compositionally biased region" description="Acidic residues" evidence="4">
    <location>
        <begin position="359"/>
        <end position="377"/>
    </location>
</feature>
<feature type="compositionally biased region" description="Basic and acidic residues" evidence="4">
    <location>
        <begin position="384"/>
        <end position="393"/>
    </location>
</feature>
<feature type="compositionally biased region" description="Basic and acidic residues" evidence="4">
    <location>
        <begin position="416"/>
        <end position="426"/>
    </location>
</feature>
<feature type="compositionally biased region" description="Basic and acidic residues" evidence="4">
    <location>
        <begin position="966"/>
        <end position="989"/>
    </location>
</feature>
<feature type="compositionally biased region" description="Basic and acidic residues" evidence="4">
    <location>
        <begin position="998"/>
        <end position="1009"/>
    </location>
</feature>
<feature type="binding site" evidence="2">
    <location>
        <begin position="601"/>
        <end position="608"/>
    </location>
    <ligand>
        <name>ATP</name>
        <dbReference type="ChEBI" id="CHEBI:30616"/>
    </ligand>
</feature>
<organism>
    <name type="scientific">Neosartorya fischeri (strain ATCC 1020 / DSM 3700 / CBS 544.65 / FGSC A1164 / JCM 1740 / NRRL 181 / WB 181)</name>
    <name type="common">Aspergillus fischerianus</name>
    <dbReference type="NCBI Taxonomy" id="331117"/>
    <lineage>
        <taxon>Eukaryota</taxon>
        <taxon>Fungi</taxon>
        <taxon>Dikarya</taxon>
        <taxon>Ascomycota</taxon>
        <taxon>Pezizomycotina</taxon>
        <taxon>Eurotiomycetes</taxon>
        <taxon>Eurotiomycetidae</taxon>
        <taxon>Eurotiales</taxon>
        <taxon>Aspergillaceae</taxon>
        <taxon>Aspergillus</taxon>
        <taxon>Aspergillus subgen. Fumigati</taxon>
    </lineage>
</organism>
<comment type="function">
    <text evidence="1">ATP-dependent RNA helicase involved spliceosome assembly and in nuclear splicing. Catalyzes an ATP-dependent conformational change of U2 snRNP. Bridges U1 and U2 snRNPs and enables stable U2 snRNP association with intron RNA (By similarity).</text>
</comment>
<comment type="catalytic activity">
    <reaction>
        <text>ATP + H2O = ADP + phosphate + H(+)</text>
        <dbReference type="Rhea" id="RHEA:13065"/>
        <dbReference type="ChEBI" id="CHEBI:15377"/>
        <dbReference type="ChEBI" id="CHEBI:15378"/>
        <dbReference type="ChEBI" id="CHEBI:30616"/>
        <dbReference type="ChEBI" id="CHEBI:43474"/>
        <dbReference type="ChEBI" id="CHEBI:456216"/>
        <dbReference type="EC" id="3.6.4.13"/>
    </reaction>
</comment>
<comment type="subcellular location">
    <subcellularLocation>
        <location evidence="1">Nucleus</location>
    </subcellularLocation>
</comment>
<comment type="domain">
    <text>The Q motif is unique to and characteristic of the DEAD box family of RNA helicases and controls ATP binding and hydrolysis.</text>
</comment>
<comment type="similarity">
    <text evidence="5">Belongs to the DEAD box helicase family. DDX46/PRP5 subfamily.</text>
</comment>
<sequence length="1193" mass="131584">MARHGDTRSPSPVGSTYSSSRRSRRDDDRYEKSRRDDGRSYRRSRSPERRYRDRDRDSYRRRDRSIDRRDDHRDEDSYRPSRRDRSRDRRRSRDRGDDRDHRRKSRERDYRSRRDDSRDRARRRTDDSADLKHKSRRDDSRTRNLDSKSRETSKPSTPAPAAPTEDEKRAERLAKLEAWKQKQAAERERKQREAAAAGGARSILEEIDRKSGLSPAVGSPQSPAATPTTDATPAPYAGKFDPKAIVRNAVPAPSTPAVLGNDVAVPQSAKASASLSSMNNHVQANKPPAAISTASSTLTVKRNVGGFGLGARQVADAEKSSAVKTLGFGEEESKRKKLERLPTPPLEDAKDDTGAVDAAVEDEDDVDMQDGGTEEENAAAARAAAERREERLQSEALRAQSKEAAPQPNGDVEMDDVSHQAESEKMEVDAAEEEVDPLDAFMSELAETAPPKKTTGARFAKAKEQQPEAMFGDEHDVDLTAVGEGDADDFLAIANKAKKKKDIPAVDHEKMEYEPFRKKFYTEPSNLAEMTDEEAASLRLELDGIKVRGVDVPKPVMKWSQCGLGVQTLDVIHRLGYENPTSIQSQAIPAIMSGRDVIGVAKTGSGKTIAFLIPMFRHIRDQRPLENMEGPIGLIMTPTRELATQIHKDCKPFLKALNLRAVCAYGGAPIKDQIAELKRGAEIVVCTPGRMIDLLAANAGRVTNLRRVTYVVLDEADRMFDMGFEPQVMKIMANIRPDRQTVLFSATFPRNMEALARKSLTKPIEIVVGGKSVVAPEITQIVEVRNEDTKFVRLLEILGNLYSDDANEDARALIFVDRQEAADTLLRELMRKGYPCMSIHGGKDQIDRDSTIEDFKAGIFPILIATSVAARGLDVKQLKLVVNYDAPNHLEDYVHRAGRTGRAGNTGTAVTFLTEEQERYSVDIAKALRQSGQKVPEPVQKMVDSFLEKVKAGKEKASASGFGGKGLERLDQERDAARMRERRTYKTGEEGEDEEDKEDKAEKADERFSKVVSSVQSAAAAATTPLPGVPKGIDLDGKITVHRTEKDPAGASKNPLDKVGSAVADIHARLSRAGVMRSGVPIDNRGPDAGAFHATLEINDFPQKARWAVTNRTNVAKILEATGTSITTKGSFYPAGKEPGPGENPKLYILVEGETELAVTNAMRELMRLLKEGTLAAADSDARAPVGGRYNVV</sequence>
<protein>
    <recommendedName>
        <fullName>Pre-mRNA-processing ATP-dependent RNA helicase prp5</fullName>
        <ecNumber>3.6.4.13</ecNumber>
    </recommendedName>
</protein>
<gene>
    <name type="primary">prp5</name>
    <name type="ORF">NFIA_015590</name>
</gene>
<accession>A1D373</accession>
<dbReference type="EC" id="3.6.4.13"/>
<dbReference type="EMBL" id="DS027688">
    <property type="protein sequence ID" value="EAW22866.1"/>
    <property type="molecule type" value="Genomic_DNA"/>
</dbReference>
<dbReference type="RefSeq" id="XP_001264763.1">
    <property type="nucleotide sequence ID" value="XM_001264762.1"/>
</dbReference>
<dbReference type="SMR" id="A1D373"/>
<dbReference type="STRING" id="331117.A1D373"/>
<dbReference type="EnsemblFungi" id="EAW22866">
    <property type="protein sequence ID" value="EAW22866"/>
    <property type="gene ID" value="NFIA_015590"/>
</dbReference>
<dbReference type="GeneID" id="4591228"/>
<dbReference type="KEGG" id="nfi:NFIA_015590"/>
<dbReference type="VEuPathDB" id="FungiDB:NFIA_015590"/>
<dbReference type="eggNOG" id="KOG0334">
    <property type="taxonomic scope" value="Eukaryota"/>
</dbReference>
<dbReference type="HOGENOM" id="CLU_003041_0_3_1"/>
<dbReference type="OMA" id="QLPMKKW"/>
<dbReference type="OrthoDB" id="196131at2759"/>
<dbReference type="Proteomes" id="UP000006702">
    <property type="component" value="Unassembled WGS sequence"/>
</dbReference>
<dbReference type="GO" id="GO:0005634">
    <property type="term" value="C:nucleus"/>
    <property type="evidence" value="ECO:0007669"/>
    <property type="project" value="UniProtKB-SubCell"/>
</dbReference>
<dbReference type="GO" id="GO:0005524">
    <property type="term" value="F:ATP binding"/>
    <property type="evidence" value="ECO:0007669"/>
    <property type="project" value="UniProtKB-KW"/>
</dbReference>
<dbReference type="GO" id="GO:0016887">
    <property type="term" value="F:ATP hydrolysis activity"/>
    <property type="evidence" value="ECO:0007669"/>
    <property type="project" value="RHEA"/>
</dbReference>
<dbReference type="GO" id="GO:0003676">
    <property type="term" value="F:nucleic acid binding"/>
    <property type="evidence" value="ECO:0007669"/>
    <property type="project" value="InterPro"/>
</dbReference>
<dbReference type="GO" id="GO:0003724">
    <property type="term" value="F:RNA helicase activity"/>
    <property type="evidence" value="ECO:0007669"/>
    <property type="project" value="UniProtKB-EC"/>
</dbReference>
<dbReference type="GO" id="GO:0006397">
    <property type="term" value="P:mRNA processing"/>
    <property type="evidence" value="ECO:0007669"/>
    <property type="project" value="UniProtKB-KW"/>
</dbReference>
<dbReference type="GO" id="GO:0008380">
    <property type="term" value="P:RNA splicing"/>
    <property type="evidence" value="ECO:0007669"/>
    <property type="project" value="UniProtKB-KW"/>
</dbReference>
<dbReference type="CDD" id="cd17953">
    <property type="entry name" value="DEADc_DDX46"/>
    <property type="match status" value="1"/>
</dbReference>
<dbReference type="CDD" id="cd22474">
    <property type="entry name" value="KH-I_PRP5_like"/>
    <property type="match status" value="1"/>
</dbReference>
<dbReference type="CDD" id="cd18787">
    <property type="entry name" value="SF2_C_DEAD"/>
    <property type="match status" value="1"/>
</dbReference>
<dbReference type="FunFam" id="3.40.50.300:FF:000079">
    <property type="entry name" value="probable ATP-dependent RNA helicase DDX17"/>
    <property type="match status" value="1"/>
</dbReference>
<dbReference type="Gene3D" id="3.40.50.300">
    <property type="entry name" value="P-loop containing nucleotide triphosphate hydrolases"/>
    <property type="match status" value="2"/>
</dbReference>
<dbReference type="InterPro" id="IPR011545">
    <property type="entry name" value="DEAD/DEAH_box_helicase_dom"/>
</dbReference>
<dbReference type="InterPro" id="IPR014001">
    <property type="entry name" value="Helicase_ATP-bd"/>
</dbReference>
<dbReference type="InterPro" id="IPR001650">
    <property type="entry name" value="Helicase_C-like"/>
</dbReference>
<dbReference type="InterPro" id="IPR027417">
    <property type="entry name" value="P-loop_NTPase"/>
</dbReference>
<dbReference type="InterPro" id="IPR056149">
    <property type="entry name" value="PRP5/DDX46/KHDC4_KH"/>
</dbReference>
<dbReference type="InterPro" id="IPR000629">
    <property type="entry name" value="RNA-helicase_DEAD-box_CS"/>
</dbReference>
<dbReference type="InterPro" id="IPR014014">
    <property type="entry name" value="RNA_helicase_DEAD_Q_motif"/>
</dbReference>
<dbReference type="PANTHER" id="PTHR47958">
    <property type="entry name" value="ATP-DEPENDENT RNA HELICASE DBP3"/>
    <property type="match status" value="1"/>
</dbReference>
<dbReference type="Pfam" id="PF00270">
    <property type="entry name" value="DEAD"/>
    <property type="match status" value="1"/>
</dbReference>
<dbReference type="Pfam" id="PF00271">
    <property type="entry name" value="Helicase_C"/>
    <property type="match status" value="1"/>
</dbReference>
<dbReference type="Pfam" id="PF23469">
    <property type="entry name" value="KH_12"/>
    <property type="match status" value="1"/>
</dbReference>
<dbReference type="SMART" id="SM00487">
    <property type="entry name" value="DEXDc"/>
    <property type="match status" value="1"/>
</dbReference>
<dbReference type="SMART" id="SM00490">
    <property type="entry name" value="HELICc"/>
    <property type="match status" value="1"/>
</dbReference>
<dbReference type="SUPFAM" id="SSF52540">
    <property type="entry name" value="P-loop containing nucleoside triphosphate hydrolases"/>
    <property type="match status" value="1"/>
</dbReference>
<dbReference type="PROSITE" id="PS00039">
    <property type="entry name" value="DEAD_ATP_HELICASE"/>
    <property type="match status" value="1"/>
</dbReference>
<dbReference type="PROSITE" id="PS51192">
    <property type="entry name" value="HELICASE_ATP_BIND_1"/>
    <property type="match status" value="1"/>
</dbReference>
<dbReference type="PROSITE" id="PS51194">
    <property type="entry name" value="HELICASE_CTER"/>
    <property type="match status" value="1"/>
</dbReference>
<dbReference type="PROSITE" id="PS51195">
    <property type="entry name" value="Q_MOTIF"/>
    <property type="match status" value="1"/>
</dbReference>
<evidence type="ECO:0000250" key="1"/>
<evidence type="ECO:0000255" key="2">
    <source>
        <dbReference type="PROSITE-ProRule" id="PRU00541"/>
    </source>
</evidence>
<evidence type="ECO:0000255" key="3">
    <source>
        <dbReference type="PROSITE-ProRule" id="PRU00542"/>
    </source>
</evidence>
<evidence type="ECO:0000256" key="4">
    <source>
        <dbReference type="SAM" id="MobiDB-lite"/>
    </source>
</evidence>
<evidence type="ECO:0000305" key="5"/>